<keyword id="KW-0963">Cytoplasm</keyword>
<keyword id="KW-0378">Hydrolase</keyword>
<evidence type="ECO:0000255" key="1">
    <source>
        <dbReference type="HAMAP-Rule" id="MF_00628"/>
    </source>
</evidence>
<evidence type="ECO:0000256" key="2">
    <source>
        <dbReference type="SAM" id="MobiDB-lite"/>
    </source>
</evidence>
<gene>
    <name evidence="1" type="primary">pth</name>
    <name type="ordered locus">OE_1379R</name>
</gene>
<accession>B0R2Y5</accession>
<comment type="function">
    <text evidence="1">The natural substrate for this enzyme may be peptidyl-tRNAs which drop off the ribosome during protein synthesis.</text>
</comment>
<comment type="catalytic activity">
    <reaction evidence="1">
        <text>an N-acyl-L-alpha-aminoacyl-tRNA + H2O = an N-acyl-L-amino acid + a tRNA + H(+)</text>
        <dbReference type="Rhea" id="RHEA:54448"/>
        <dbReference type="Rhea" id="RHEA-COMP:10123"/>
        <dbReference type="Rhea" id="RHEA-COMP:13883"/>
        <dbReference type="ChEBI" id="CHEBI:15377"/>
        <dbReference type="ChEBI" id="CHEBI:15378"/>
        <dbReference type="ChEBI" id="CHEBI:59874"/>
        <dbReference type="ChEBI" id="CHEBI:78442"/>
        <dbReference type="ChEBI" id="CHEBI:138191"/>
        <dbReference type="EC" id="3.1.1.29"/>
    </reaction>
</comment>
<comment type="subcellular location">
    <subcellularLocation>
        <location evidence="1">Cytoplasm</location>
    </subcellularLocation>
</comment>
<comment type="similarity">
    <text evidence="1">Belongs to the PTH2 family.</text>
</comment>
<proteinExistence type="inferred from homology"/>
<protein>
    <recommendedName>
        <fullName evidence="1">Peptidyl-tRNA hydrolase</fullName>
        <shortName evidence="1">PTH</shortName>
        <ecNumber evidence="1">3.1.1.29</ecNumber>
    </recommendedName>
</protein>
<dbReference type="EC" id="3.1.1.29" evidence="1"/>
<dbReference type="EMBL" id="AM774415">
    <property type="protein sequence ID" value="CAP13095.1"/>
    <property type="molecule type" value="Genomic_DNA"/>
</dbReference>
<dbReference type="SMR" id="B0R2Y5"/>
<dbReference type="EnsemblBacteria" id="CAP13095">
    <property type="protein sequence ID" value="CAP13095"/>
    <property type="gene ID" value="OE_1379R"/>
</dbReference>
<dbReference type="KEGG" id="hsl:OE_1379R"/>
<dbReference type="HOGENOM" id="CLU_073661_2_2_2"/>
<dbReference type="PhylomeDB" id="B0R2Y5"/>
<dbReference type="Proteomes" id="UP000001321">
    <property type="component" value="Chromosome"/>
</dbReference>
<dbReference type="GO" id="GO:0005829">
    <property type="term" value="C:cytosol"/>
    <property type="evidence" value="ECO:0007669"/>
    <property type="project" value="TreeGrafter"/>
</dbReference>
<dbReference type="GO" id="GO:0004045">
    <property type="term" value="F:peptidyl-tRNA hydrolase activity"/>
    <property type="evidence" value="ECO:0007669"/>
    <property type="project" value="UniProtKB-UniRule"/>
</dbReference>
<dbReference type="GO" id="GO:0006412">
    <property type="term" value="P:translation"/>
    <property type="evidence" value="ECO:0007669"/>
    <property type="project" value="UniProtKB-UniRule"/>
</dbReference>
<dbReference type="CDD" id="cd02430">
    <property type="entry name" value="PTH2"/>
    <property type="match status" value="1"/>
</dbReference>
<dbReference type="FunFam" id="3.40.1490.10:FF:000001">
    <property type="entry name" value="Peptidyl-tRNA hydrolase 2"/>
    <property type="match status" value="1"/>
</dbReference>
<dbReference type="Gene3D" id="3.40.1490.10">
    <property type="entry name" value="Bit1"/>
    <property type="match status" value="1"/>
</dbReference>
<dbReference type="HAMAP" id="MF_00628">
    <property type="entry name" value="Pept_tRNA_hydro_arch"/>
    <property type="match status" value="1"/>
</dbReference>
<dbReference type="InterPro" id="IPR023476">
    <property type="entry name" value="Pep_tRNA_hydro_II_dom_sf"/>
</dbReference>
<dbReference type="InterPro" id="IPR034759">
    <property type="entry name" value="Pept_tRNA_hydro_arch"/>
</dbReference>
<dbReference type="InterPro" id="IPR002833">
    <property type="entry name" value="PTH2"/>
</dbReference>
<dbReference type="NCBIfam" id="TIGR00283">
    <property type="entry name" value="arch_pth2"/>
    <property type="match status" value="1"/>
</dbReference>
<dbReference type="NCBIfam" id="NF003314">
    <property type="entry name" value="PRK04322.1"/>
    <property type="match status" value="1"/>
</dbReference>
<dbReference type="PANTHER" id="PTHR12649">
    <property type="entry name" value="PEPTIDYL-TRNA HYDROLASE 2"/>
    <property type="match status" value="1"/>
</dbReference>
<dbReference type="PANTHER" id="PTHR12649:SF11">
    <property type="entry name" value="PEPTIDYL-TRNA HYDROLASE 2, MITOCHONDRIAL"/>
    <property type="match status" value="1"/>
</dbReference>
<dbReference type="Pfam" id="PF01981">
    <property type="entry name" value="PTH2"/>
    <property type="match status" value="1"/>
</dbReference>
<dbReference type="SUPFAM" id="SSF102462">
    <property type="entry name" value="Peptidyl-tRNA hydrolase II"/>
    <property type="match status" value="1"/>
</dbReference>
<organism>
    <name type="scientific">Halobacterium salinarum (strain ATCC 29341 / DSM 671 / R1)</name>
    <dbReference type="NCBI Taxonomy" id="478009"/>
    <lineage>
        <taxon>Archaea</taxon>
        <taxon>Methanobacteriati</taxon>
        <taxon>Methanobacteriota</taxon>
        <taxon>Stenosarchaea group</taxon>
        <taxon>Halobacteria</taxon>
        <taxon>Halobacteriales</taxon>
        <taxon>Halobacteriaceae</taxon>
        <taxon>Halobacterium</taxon>
        <taxon>Halobacterium salinarum NRC-34001</taxon>
    </lineage>
</organism>
<sequence>MKQVIAARTDIGMGQGKLAAQVAHASLNAYEYTDDRAVRRWKDEGQTKVVVKVGSERELYERSEEAKRAGLPTGLISDAGRTQLEPGTPTALAIGPAPDADVDQITGDLSLF</sequence>
<name>PTH_HALS3</name>
<feature type="chain" id="PRO_1000130577" description="Peptidyl-tRNA hydrolase">
    <location>
        <begin position="1"/>
        <end position="112"/>
    </location>
</feature>
<feature type="region of interest" description="Disordered" evidence="2">
    <location>
        <begin position="64"/>
        <end position="99"/>
    </location>
</feature>
<reference key="1">
    <citation type="journal article" date="2008" name="Genomics">
        <title>Evolution in the laboratory: the genome of Halobacterium salinarum strain R1 compared to that of strain NRC-1.</title>
        <authorList>
            <person name="Pfeiffer F."/>
            <person name="Schuster S.C."/>
            <person name="Broicher A."/>
            <person name="Falb M."/>
            <person name="Palm P."/>
            <person name="Rodewald K."/>
            <person name="Ruepp A."/>
            <person name="Soppa J."/>
            <person name="Tittor J."/>
            <person name="Oesterhelt D."/>
        </authorList>
    </citation>
    <scope>NUCLEOTIDE SEQUENCE [LARGE SCALE GENOMIC DNA]</scope>
    <source>
        <strain>ATCC 29341 / DSM 671 / R1</strain>
    </source>
</reference>